<gene>
    <name evidence="5" type="ordered locus">Rv0518</name>
</gene>
<name>GDSL_MYCTU</name>
<accession>O33363</accession>
<accession>F2GND3</accession>
<accession>I6Y810</accession>
<accession>Q7D9Q4</accession>
<keyword id="KW-0134">Cell wall</keyword>
<keyword id="KW-0378">Hydrolase</keyword>
<keyword id="KW-0442">Lipid degradation</keyword>
<keyword id="KW-0443">Lipid metabolism</keyword>
<keyword id="KW-1185">Reference proteome</keyword>
<keyword id="KW-0964">Secreted</keyword>
<keyword id="KW-0719">Serine esterase</keyword>
<keyword id="KW-0732">Signal</keyword>
<comment type="function">
    <text evidence="3">GDSL lipase that catalyzes the hydrolysis of p-nitrophenyl (pNP) esters. pNP-decanoate (C10) is the preferred substrate. It can also use pNP-octanoate (C8), pNP-dodecanoate (C12) and pNP-tetradecanoate (C14). Has lower activity with pNP-butyrate (C4), pNP-palmitate (C16) and pNP-stearate (C18) (PubMed:31125644). Does not show phospholipase A1 activity (PubMed:31125644). Might help bacteria to utilize available lipids for its growth as well as provide resistance to various intracellular stresses by cell wall modulation resulting in enhanced intracellular survival (PubMed:31125644).</text>
</comment>
<comment type="catalytic activity">
    <reaction evidence="3">
        <text>a fatty acid ester + H2O = an aliphatic alcohol + a fatty acid + H(+)</text>
        <dbReference type="Rhea" id="RHEA:59388"/>
        <dbReference type="ChEBI" id="CHEBI:2571"/>
        <dbReference type="ChEBI" id="CHEBI:15377"/>
        <dbReference type="ChEBI" id="CHEBI:15378"/>
        <dbReference type="ChEBI" id="CHEBI:28868"/>
        <dbReference type="ChEBI" id="CHEBI:35748"/>
    </reaction>
</comment>
<comment type="catalytic activity">
    <reaction evidence="3">
        <text>decanoate ester + H2O = decanoate + an aliphatic alcohol + H(+)</text>
        <dbReference type="Rhea" id="RHEA:47360"/>
        <dbReference type="ChEBI" id="CHEBI:2571"/>
        <dbReference type="ChEBI" id="CHEBI:15377"/>
        <dbReference type="ChEBI" id="CHEBI:15378"/>
        <dbReference type="ChEBI" id="CHEBI:27689"/>
        <dbReference type="ChEBI" id="CHEBI:87658"/>
    </reaction>
</comment>
<comment type="catalytic activity">
    <reaction evidence="3">
        <text>an octanoate ester + H2O = an aliphatic alcohol + octanoate + H(+)</text>
        <dbReference type="Rhea" id="RHEA:47356"/>
        <dbReference type="ChEBI" id="CHEBI:2571"/>
        <dbReference type="ChEBI" id="CHEBI:15377"/>
        <dbReference type="ChEBI" id="CHEBI:15378"/>
        <dbReference type="ChEBI" id="CHEBI:25646"/>
        <dbReference type="ChEBI" id="CHEBI:87657"/>
    </reaction>
</comment>
<comment type="catalytic activity">
    <reaction evidence="3">
        <text>a dodecanoate ester + H2O = an aliphatic alcohol + dodecanoate + H(+)</text>
        <dbReference type="Rhea" id="RHEA:47364"/>
        <dbReference type="ChEBI" id="CHEBI:2571"/>
        <dbReference type="ChEBI" id="CHEBI:15377"/>
        <dbReference type="ChEBI" id="CHEBI:15378"/>
        <dbReference type="ChEBI" id="CHEBI:18262"/>
        <dbReference type="ChEBI" id="CHEBI:87659"/>
    </reaction>
</comment>
<comment type="catalytic activity">
    <reaction evidence="3">
        <text>a tetradecanoate ester + H2O = an aliphatic alcohol + tetradecanoate + H(+)</text>
        <dbReference type="Rhea" id="RHEA:47388"/>
        <dbReference type="ChEBI" id="CHEBI:2571"/>
        <dbReference type="ChEBI" id="CHEBI:15377"/>
        <dbReference type="ChEBI" id="CHEBI:15378"/>
        <dbReference type="ChEBI" id="CHEBI:30807"/>
        <dbReference type="ChEBI" id="CHEBI:87691"/>
    </reaction>
</comment>
<comment type="activity regulation">
    <text evidence="3">Activity is inhibited by the serine modifier phenylmethylsulfonyl fluoride (PMSF).</text>
</comment>
<comment type="biophysicochemical properties">
    <kinetics>
        <KM evidence="3">400 uM for pNP-decanoate</KM>
        <text evidence="3">kcat is 14440 min(-1) with pNP-decanoate as substrate.</text>
    </kinetics>
    <phDependence>
        <text evidence="3">Optimum pH is 9.0 (with pNP-decanoate as substrate).</text>
    </phDependence>
    <temperatureDependence>
        <text evidence="3">Optimum temperature is 40 degrees Celsius (with pNP-decanoate as substrate).</text>
    </temperatureDependence>
</comment>
<comment type="subcellular location">
    <subcellularLocation>
        <location evidence="3">Secreted</location>
        <location evidence="3">Cell wall</location>
    </subcellularLocation>
    <subcellularLocation>
        <location evidence="3">Secreted</location>
        <location evidence="3">Extracellular space</location>
    </subcellularLocation>
</comment>
<comment type="induction">
    <text evidence="3">Expression is up-regulated under nutrient starvation (in strain H37Ra).</text>
</comment>
<comment type="miscellaneous">
    <text evidence="3">Expression in M.smegmatis alters colony morphology and growth kinetics, provides resistance to SDS, lysozyme and anti-TB drugs, increases the total lipid content and trehalose dimycolates, and enhances infection ability and intracellular survival capability of M.smegmatis.</text>
</comment>
<comment type="similarity">
    <text evidence="4">Belongs to the 'GDSL' lipolytic enzyme family.</text>
</comment>
<organism>
    <name type="scientific">Mycobacterium tuberculosis (strain ATCC 25618 / H37Rv)</name>
    <dbReference type="NCBI Taxonomy" id="83332"/>
    <lineage>
        <taxon>Bacteria</taxon>
        <taxon>Bacillati</taxon>
        <taxon>Actinomycetota</taxon>
        <taxon>Actinomycetes</taxon>
        <taxon>Mycobacteriales</taxon>
        <taxon>Mycobacteriaceae</taxon>
        <taxon>Mycobacterium</taxon>
        <taxon>Mycobacterium tuberculosis complex</taxon>
    </lineage>
</organism>
<proteinExistence type="evidence at protein level"/>
<protein>
    <recommendedName>
        <fullName evidence="4">GDSL lipase Rv0518</fullName>
        <ecNumber evidence="3">3.1.1.-</ecNumber>
    </recommendedName>
</protein>
<sequence length="231" mass="24636">MSRPGTYVIGLTLLVGLVVGNPGCPRSYRPLTLDYRLNPVAVIGDSYTTGTDEGGLGSKSWTARTWQMLAARGVRIAADVAAEGRAGYGVPGDHGNVFEDLTARAVQPDDALVVFFGSRNDQGMDPEDPEMLAEKVRDTFDLARHRAPSASLLVIAPPWPTADVPGPMLRIRDVLGAQARAAGAVFVDPIADHWFVDRPELIGADGVHPNDAGHEYLADKIAPLISMELVG</sequence>
<evidence type="ECO:0000250" key="1">
    <source>
        <dbReference type="UniProtKB" id="P41734"/>
    </source>
</evidence>
<evidence type="ECO:0000255" key="2"/>
<evidence type="ECO:0000269" key="3">
    <source>
    </source>
</evidence>
<evidence type="ECO:0000305" key="4"/>
<evidence type="ECO:0000312" key="5">
    <source>
        <dbReference type="EMBL" id="CCP43255.1"/>
    </source>
</evidence>
<evidence type="ECO:0007744" key="6">
    <source>
    </source>
</evidence>
<reference key="1">
    <citation type="journal article" date="1998" name="Nature">
        <title>Deciphering the biology of Mycobacterium tuberculosis from the complete genome sequence.</title>
        <authorList>
            <person name="Cole S.T."/>
            <person name="Brosch R."/>
            <person name="Parkhill J."/>
            <person name="Garnier T."/>
            <person name="Churcher C.M."/>
            <person name="Harris D.E."/>
            <person name="Gordon S.V."/>
            <person name="Eiglmeier K."/>
            <person name="Gas S."/>
            <person name="Barry C.E. III"/>
            <person name="Tekaia F."/>
            <person name="Badcock K."/>
            <person name="Basham D."/>
            <person name="Brown D."/>
            <person name="Chillingworth T."/>
            <person name="Connor R."/>
            <person name="Davies R.M."/>
            <person name="Devlin K."/>
            <person name="Feltwell T."/>
            <person name="Gentles S."/>
            <person name="Hamlin N."/>
            <person name="Holroyd S."/>
            <person name="Hornsby T."/>
            <person name="Jagels K."/>
            <person name="Krogh A."/>
            <person name="McLean J."/>
            <person name="Moule S."/>
            <person name="Murphy L.D."/>
            <person name="Oliver S."/>
            <person name="Osborne J."/>
            <person name="Quail M.A."/>
            <person name="Rajandream M.A."/>
            <person name="Rogers J."/>
            <person name="Rutter S."/>
            <person name="Seeger K."/>
            <person name="Skelton S."/>
            <person name="Squares S."/>
            <person name="Squares R."/>
            <person name="Sulston J.E."/>
            <person name="Taylor K."/>
            <person name="Whitehead S."/>
            <person name="Barrell B.G."/>
        </authorList>
    </citation>
    <scope>NUCLEOTIDE SEQUENCE [LARGE SCALE GENOMIC DNA]</scope>
    <source>
        <strain>ATCC 25618 / H37Rv</strain>
    </source>
</reference>
<reference evidence="6" key="2">
    <citation type="journal article" date="2011" name="Mol. Cell. Proteomics">
        <title>Proteogenomic analysis of Mycobacterium tuberculosis by high resolution mass spectrometry.</title>
        <authorList>
            <person name="Kelkar D.S."/>
            <person name="Kumar D."/>
            <person name="Kumar P."/>
            <person name="Balakrishnan L."/>
            <person name="Muthusamy B."/>
            <person name="Yadav A.K."/>
            <person name="Shrivastava P."/>
            <person name="Marimuthu A."/>
            <person name="Anand S."/>
            <person name="Sundaram H."/>
            <person name="Kingsbury R."/>
            <person name="Harsha H.C."/>
            <person name="Nair B."/>
            <person name="Prasad T.S."/>
            <person name="Chauhan D.S."/>
            <person name="Katoch K."/>
            <person name="Katoch V.M."/>
            <person name="Kumar P."/>
            <person name="Chaerkady R."/>
            <person name="Ramachandran S."/>
            <person name="Dash D."/>
            <person name="Pandey A."/>
        </authorList>
    </citation>
    <scope>IDENTIFICATION BY MASS SPECTROMETRY [LARGE SCALE ANALYSIS]</scope>
</reference>
<reference key="3">
    <citation type="journal article" date="2019" name="Int. J. Biol. Macromol.">
        <title>Rv0518, a nutritive stress inducible GDSL lipase of Mycobacterium tuberculosis, enhanced intracellular survival of bacteria by cell wall modulation.</title>
        <authorList>
            <person name="Kaur J."/>
            <person name="Kaur J."/>
        </authorList>
    </citation>
    <scope>FUNCTION</scope>
    <scope>CATALYTIC ACTIVITY</scope>
    <scope>ACTIVITY REGULATION</scope>
    <scope>BIOPHYSICOCHEMICAL PROPERTIES</scope>
    <scope>SUBCELLULAR LOCATION</scope>
    <scope>INDUCTION</scope>
    <scope>MUTAGENESIS OF SER-46; GLY-87; ASN-120; ASP-205 AND HIS-208</scope>
    <source>
        <strain>H37Rv</strain>
    </source>
</reference>
<dbReference type="EC" id="3.1.1.-" evidence="3"/>
<dbReference type="EMBL" id="AL123456">
    <property type="protein sequence ID" value="CCP43255.1"/>
    <property type="molecule type" value="Genomic_DNA"/>
</dbReference>
<dbReference type="RefSeq" id="NP_215032.1">
    <property type="nucleotide sequence ID" value="NC_000962.3"/>
</dbReference>
<dbReference type="RefSeq" id="WP_003402818.1">
    <property type="nucleotide sequence ID" value="NZ_NVQJ01000068.1"/>
</dbReference>
<dbReference type="SMR" id="O33363"/>
<dbReference type="STRING" id="83332.Rv0518"/>
<dbReference type="PaxDb" id="83332-Rv0518"/>
<dbReference type="DNASU" id="887321"/>
<dbReference type="GeneID" id="887321"/>
<dbReference type="KEGG" id="mtu:Rv0518"/>
<dbReference type="KEGG" id="mtv:RVBD_0518"/>
<dbReference type="PATRIC" id="fig|83332.111.peg.571"/>
<dbReference type="TubercuList" id="Rv0518"/>
<dbReference type="eggNOG" id="COG2755">
    <property type="taxonomic scope" value="Bacteria"/>
</dbReference>
<dbReference type="InParanoid" id="O33363"/>
<dbReference type="OrthoDB" id="8215557at2"/>
<dbReference type="Proteomes" id="UP000001584">
    <property type="component" value="Chromosome"/>
</dbReference>
<dbReference type="GO" id="GO:0005576">
    <property type="term" value="C:extracellular region"/>
    <property type="evidence" value="ECO:0007669"/>
    <property type="project" value="UniProtKB-SubCell"/>
</dbReference>
<dbReference type="GO" id="GO:0052689">
    <property type="term" value="F:carboxylic ester hydrolase activity"/>
    <property type="evidence" value="ECO:0007669"/>
    <property type="project" value="UniProtKB-KW"/>
</dbReference>
<dbReference type="GO" id="GO:0016042">
    <property type="term" value="P:lipid catabolic process"/>
    <property type="evidence" value="ECO:0007669"/>
    <property type="project" value="UniProtKB-KW"/>
</dbReference>
<dbReference type="CDD" id="cd00229">
    <property type="entry name" value="SGNH_hydrolase"/>
    <property type="match status" value="1"/>
</dbReference>
<dbReference type="Gene3D" id="3.40.50.1110">
    <property type="entry name" value="SGNH hydrolase"/>
    <property type="match status" value="1"/>
</dbReference>
<dbReference type="InterPro" id="IPR054624">
    <property type="entry name" value="GDSL_Rv0518"/>
</dbReference>
<dbReference type="InterPro" id="IPR053140">
    <property type="entry name" value="GDSL_Rv0518-like"/>
</dbReference>
<dbReference type="InterPro" id="IPR013830">
    <property type="entry name" value="SGNH_hydro"/>
</dbReference>
<dbReference type="InterPro" id="IPR036514">
    <property type="entry name" value="SGNH_hydro_sf"/>
</dbReference>
<dbReference type="NCBIfam" id="NF045548">
    <property type="entry name" value="GDSL_lipase"/>
    <property type="match status" value="1"/>
</dbReference>
<dbReference type="PANTHER" id="PTHR43784">
    <property type="entry name" value="GDSL-LIKE LIPASE/ACYLHYDROLASE, PUTATIVE (AFU_ORTHOLOGUE AFUA_2G00820)-RELATED"/>
    <property type="match status" value="1"/>
</dbReference>
<dbReference type="PANTHER" id="PTHR43784:SF2">
    <property type="entry name" value="GDSL-LIKE LIPASE_ACYLHYDROLASE, PUTATIVE (AFU_ORTHOLOGUE AFUA_2G00820)-RELATED"/>
    <property type="match status" value="1"/>
</dbReference>
<dbReference type="Pfam" id="PF13472">
    <property type="entry name" value="Lipase_GDSL_2"/>
    <property type="match status" value="1"/>
</dbReference>
<dbReference type="SUPFAM" id="SSF52266">
    <property type="entry name" value="SGNH hydrolase"/>
    <property type="match status" value="1"/>
</dbReference>
<feature type="signal peptide" evidence="2">
    <location>
        <begin position="1"/>
        <end position="20"/>
    </location>
</feature>
<feature type="chain" id="PRO_0000448306" description="GDSL lipase Rv0518">
    <location>
        <begin position="21"/>
        <end position="231"/>
    </location>
</feature>
<feature type="active site" description="Nucleophile" evidence="1">
    <location>
        <position position="46"/>
    </location>
</feature>
<feature type="active site" description="Proton donor" evidence="1">
    <location>
        <position position="205"/>
    </location>
</feature>
<feature type="active site" description="Proton acceptor" evidence="1">
    <location>
        <position position="208"/>
    </location>
</feature>
<feature type="site" description="Transition state stabilizer" evidence="1">
    <location>
        <position position="87"/>
    </location>
</feature>
<feature type="site" description="Transition state stabilizer" evidence="1">
    <location>
        <position position="120"/>
    </location>
</feature>
<feature type="mutagenesis site" description="Loss of activity." evidence="3">
    <original>S</original>
    <variation>A</variation>
    <location>
        <position position="46"/>
    </location>
</feature>
<feature type="mutagenesis site" description="Retains 50-55% of activity." evidence="3">
    <original>G</original>
    <variation>A</variation>
    <location>
        <position position="87"/>
    </location>
</feature>
<feature type="mutagenesis site" description="Retains 50-55% of activity." evidence="3">
    <original>N</original>
    <variation>A</variation>
    <location>
        <position position="120"/>
    </location>
</feature>
<feature type="mutagenesis site" description="Retains 15-20% of activity." evidence="3">
    <original>D</original>
    <variation>A</variation>
    <location>
        <position position="205"/>
    </location>
</feature>
<feature type="mutagenesis site" description="Retains 15-20% of activity." evidence="3">
    <original>H</original>
    <variation>A</variation>
    <location>
        <position position="208"/>
    </location>
</feature>